<name>RL3_MYXXD</name>
<organism>
    <name type="scientific">Myxococcus xanthus (strain DK1622)</name>
    <dbReference type="NCBI Taxonomy" id="246197"/>
    <lineage>
        <taxon>Bacteria</taxon>
        <taxon>Pseudomonadati</taxon>
        <taxon>Myxococcota</taxon>
        <taxon>Myxococcia</taxon>
        <taxon>Myxococcales</taxon>
        <taxon>Cystobacterineae</taxon>
        <taxon>Myxococcaceae</taxon>
        <taxon>Myxococcus</taxon>
    </lineage>
</organism>
<gene>
    <name evidence="1" type="primary">rplC</name>
    <name type="ordered locus">MXAN_3370</name>
</gene>
<accession>Q1D706</accession>
<reference key="1">
    <citation type="journal article" date="2006" name="Proc. Natl. Acad. Sci. U.S.A.">
        <title>Evolution of sensory complexity recorded in a myxobacterial genome.</title>
        <authorList>
            <person name="Goldman B.S."/>
            <person name="Nierman W.C."/>
            <person name="Kaiser D."/>
            <person name="Slater S.C."/>
            <person name="Durkin A.S."/>
            <person name="Eisen J.A."/>
            <person name="Ronning C.M."/>
            <person name="Barbazuk W.B."/>
            <person name="Blanchard M."/>
            <person name="Field C."/>
            <person name="Halling C."/>
            <person name="Hinkle G."/>
            <person name="Iartchuk O."/>
            <person name="Kim H.S."/>
            <person name="Mackenzie C."/>
            <person name="Madupu R."/>
            <person name="Miller N."/>
            <person name="Shvartsbeyn A."/>
            <person name="Sullivan S.A."/>
            <person name="Vaudin M."/>
            <person name="Wiegand R."/>
            <person name="Kaplan H.B."/>
        </authorList>
    </citation>
    <scope>NUCLEOTIDE SEQUENCE [LARGE SCALE GENOMIC DNA]</scope>
    <source>
        <strain>DK1622</strain>
    </source>
</reference>
<protein>
    <recommendedName>
        <fullName evidence="1">Large ribosomal subunit protein uL3</fullName>
    </recommendedName>
    <alternativeName>
        <fullName evidence="3">50S ribosomal protein L3</fullName>
    </alternativeName>
</protein>
<proteinExistence type="inferred from homology"/>
<sequence>MKGLIGKKIGMTQVFNDEGNLVPVTVIDVGTCQVVGKRTPEKDNYSAVTIGFGEIREKILNLAERGFFKKANAPYRRHLKEFRVTPEEAASFNVGDAVKADMFAKGELVDVTGITKGRGFSGVMRRWNFKGSQTKTHGTHEYQRHPGAIGQRKTPGRVYPNKKMPGHYGVDQVTTQNLTVVDVDVEKGLVLVKGAVAGHNNGVVYIRPSIKAAMRAQHKAARGA</sequence>
<evidence type="ECO:0000255" key="1">
    <source>
        <dbReference type="HAMAP-Rule" id="MF_01325"/>
    </source>
</evidence>
<evidence type="ECO:0000256" key="2">
    <source>
        <dbReference type="SAM" id="MobiDB-lite"/>
    </source>
</evidence>
<evidence type="ECO:0000305" key="3"/>
<comment type="function">
    <text evidence="1">One of the primary rRNA binding proteins, it binds directly near the 3'-end of the 23S rRNA, where it nucleates assembly of the 50S subunit.</text>
</comment>
<comment type="subunit">
    <text evidence="1">Part of the 50S ribosomal subunit. Forms a cluster with proteins L14 and L19.</text>
</comment>
<comment type="similarity">
    <text evidence="1">Belongs to the universal ribosomal protein uL3 family.</text>
</comment>
<keyword id="KW-1185">Reference proteome</keyword>
<keyword id="KW-0687">Ribonucleoprotein</keyword>
<keyword id="KW-0689">Ribosomal protein</keyword>
<keyword id="KW-0694">RNA-binding</keyword>
<keyword id="KW-0699">rRNA-binding</keyword>
<dbReference type="EMBL" id="CP000113">
    <property type="protein sequence ID" value="ABF86371.1"/>
    <property type="molecule type" value="Genomic_DNA"/>
</dbReference>
<dbReference type="RefSeq" id="WP_011553403.1">
    <property type="nucleotide sequence ID" value="NC_008095.1"/>
</dbReference>
<dbReference type="SMR" id="Q1D706"/>
<dbReference type="STRING" id="246197.MXAN_3370"/>
<dbReference type="EnsemblBacteria" id="ABF86371">
    <property type="protein sequence ID" value="ABF86371"/>
    <property type="gene ID" value="MXAN_3370"/>
</dbReference>
<dbReference type="GeneID" id="41360717"/>
<dbReference type="KEGG" id="mxa:MXAN_3370"/>
<dbReference type="eggNOG" id="COG0087">
    <property type="taxonomic scope" value="Bacteria"/>
</dbReference>
<dbReference type="HOGENOM" id="CLU_044142_4_1_7"/>
<dbReference type="OrthoDB" id="9806135at2"/>
<dbReference type="Proteomes" id="UP000002402">
    <property type="component" value="Chromosome"/>
</dbReference>
<dbReference type="GO" id="GO:0022625">
    <property type="term" value="C:cytosolic large ribosomal subunit"/>
    <property type="evidence" value="ECO:0007669"/>
    <property type="project" value="TreeGrafter"/>
</dbReference>
<dbReference type="GO" id="GO:0019843">
    <property type="term" value="F:rRNA binding"/>
    <property type="evidence" value="ECO:0007669"/>
    <property type="project" value="UniProtKB-UniRule"/>
</dbReference>
<dbReference type="GO" id="GO:0003735">
    <property type="term" value="F:structural constituent of ribosome"/>
    <property type="evidence" value="ECO:0007669"/>
    <property type="project" value="InterPro"/>
</dbReference>
<dbReference type="GO" id="GO:0006412">
    <property type="term" value="P:translation"/>
    <property type="evidence" value="ECO:0007669"/>
    <property type="project" value="UniProtKB-UniRule"/>
</dbReference>
<dbReference type="FunFam" id="2.40.30.10:FF:000004">
    <property type="entry name" value="50S ribosomal protein L3"/>
    <property type="match status" value="1"/>
</dbReference>
<dbReference type="Gene3D" id="3.30.160.810">
    <property type="match status" value="1"/>
</dbReference>
<dbReference type="Gene3D" id="2.40.30.10">
    <property type="entry name" value="Translation factors"/>
    <property type="match status" value="1"/>
</dbReference>
<dbReference type="HAMAP" id="MF_01325_B">
    <property type="entry name" value="Ribosomal_uL3_B"/>
    <property type="match status" value="1"/>
</dbReference>
<dbReference type="InterPro" id="IPR000597">
    <property type="entry name" value="Ribosomal_uL3"/>
</dbReference>
<dbReference type="InterPro" id="IPR019927">
    <property type="entry name" value="Ribosomal_uL3_bac/org-type"/>
</dbReference>
<dbReference type="InterPro" id="IPR019926">
    <property type="entry name" value="Ribosomal_uL3_CS"/>
</dbReference>
<dbReference type="InterPro" id="IPR009000">
    <property type="entry name" value="Transl_B-barrel_sf"/>
</dbReference>
<dbReference type="NCBIfam" id="TIGR03625">
    <property type="entry name" value="L3_bact"/>
    <property type="match status" value="1"/>
</dbReference>
<dbReference type="PANTHER" id="PTHR11229">
    <property type="entry name" value="50S RIBOSOMAL PROTEIN L3"/>
    <property type="match status" value="1"/>
</dbReference>
<dbReference type="PANTHER" id="PTHR11229:SF16">
    <property type="entry name" value="LARGE RIBOSOMAL SUBUNIT PROTEIN UL3C"/>
    <property type="match status" value="1"/>
</dbReference>
<dbReference type="Pfam" id="PF00297">
    <property type="entry name" value="Ribosomal_L3"/>
    <property type="match status" value="1"/>
</dbReference>
<dbReference type="SUPFAM" id="SSF50447">
    <property type="entry name" value="Translation proteins"/>
    <property type="match status" value="1"/>
</dbReference>
<dbReference type="PROSITE" id="PS00474">
    <property type="entry name" value="RIBOSOMAL_L3"/>
    <property type="match status" value="1"/>
</dbReference>
<feature type="chain" id="PRO_1000067565" description="Large ribosomal subunit protein uL3">
    <location>
        <begin position="1"/>
        <end position="224"/>
    </location>
</feature>
<feature type="region of interest" description="Disordered" evidence="2">
    <location>
        <begin position="132"/>
        <end position="153"/>
    </location>
</feature>